<organism>
    <name type="scientific">Homo sapiens</name>
    <name type="common">Human</name>
    <dbReference type="NCBI Taxonomy" id="9606"/>
    <lineage>
        <taxon>Eukaryota</taxon>
        <taxon>Metazoa</taxon>
        <taxon>Chordata</taxon>
        <taxon>Craniata</taxon>
        <taxon>Vertebrata</taxon>
        <taxon>Euteleostomi</taxon>
        <taxon>Mammalia</taxon>
        <taxon>Eutheria</taxon>
        <taxon>Euarchontoglires</taxon>
        <taxon>Primates</taxon>
        <taxon>Haplorrhini</taxon>
        <taxon>Catarrhini</taxon>
        <taxon>Hominidae</taxon>
        <taxon>Homo</taxon>
    </lineage>
</organism>
<comment type="function">
    <text evidence="3 4 5">Component of the FTS/Hook/FHIP complex (FHF complex) (PubMed:32073997). The FHF complex may function to promote vesicle trafficking and/or fusion via the homotypic vesicular protein sorting complex (the HOPS complex). Regulates apoptosis by enhancing phosphorylation and activation of AKT1. Increases release of TNFSF6 via the AKT1/GSK3B/NFATC1 signaling cascade. FHF complex promotes the distribution of AP-4 complex to the perinuclear area of the cell (PubMed:32073997).</text>
</comment>
<comment type="subunit">
    <text evidence="3 4 5">Component of the FTS/Hook/FHIP complex (FHF complex), composed of AKTIP/FTS, FHIP1B, and one or more members of the Hook family of proteins HOOK1, HOOK2, and HOOK3. Interacts directly with HOOK1, HOOK2 and HOOK3 (PubMed:18799622, PubMed:32073997). The FHF complex associates with the homotypic vesicular sorting complex (the HOPS complex) (PubMed:18799622). Also interacts with AKT1. May interact with FHIP1A (PubMed:32073997).</text>
</comment>
<comment type="interaction">
    <interactant intactId="EBI-711399">
        <id>Q9H8T0</id>
    </interactant>
    <interactant intactId="EBI-21303726">
        <id>Q05DH4</id>
        <label>FHIP1A</label>
    </interactant>
    <organismsDiffer>false</organismsDiffer>
    <experiments>5</experiments>
</comment>
<comment type="interaction">
    <interactant intactId="EBI-711399">
        <id>Q9H8T0</id>
    </interactant>
    <interactant intactId="EBI-746704">
        <id>Q9UJC3</id>
        <label>HOOK1</label>
    </interactant>
    <organismsDiffer>false</organismsDiffer>
    <experiments>10</experiments>
</comment>
<comment type="interaction">
    <interactant intactId="EBI-711399">
        <id>Q9H8T0</id>
    </interactant>
    <interactant intactId="EBI-743290">
        <id>Q96ED9</id>
        <label>HOOK2</label>
    </interactant>
    <organismsDiffer>false</organismsDiffer>
    <experiments>8</experiments>
</comment>
<comment type="interaction">
    <interactant intactId="EBI-711399">
        <id>Q9H8T0</id>
    </interactant>
    <interactant intactId="EBI-10961706">
        <id>Q96ED9-2</id>
        <label>HOOK2</label>
    </interactant>
    <organismsDiffer>false</organismsDiffer>
    <experiments>3</experiments>
</comment>
<comment type="interaction">
    <interactant intactId="EBI-711399">
        <id>Q9H8T0</id>
    </interactant>
    <interactant intactId="EBI-1777078">
        <id>Q86VS8</id>
        <label>HOOK3</label>
    </interactant>
    <organismsDiffer>false</organismsDiffer>
    <experiments>5</experiments>
</comment>
<comment type="interaction">
    <interactant intactId="EBI-711399">
        <id>Q9H8T0</id>
    </interactant>
    <interactant intactId="EBI-742790">
        <id>Q13049</id>
        <label>TRIM32</label>
    </interactant>
    <organismsDiffer>false</organismsDiffer>
    <experiments>3</experiments>
</comment>
<comment type="subcellular location">
    <subcellularLocation>
        <location evidence="3">Cytoplasm</location>
    </subcellularLocation>
    <subcellularLocation>
        <location evidence="3">Cell membrane</location>
        <topology evidence="3">Peripheral membrane protein</topology>
    </subcellularLocation>
</comment>
<comment type="alternative products">
    <event type="alternative splicing"/>
    <isoform>
        <id>Q9H8T0-1</id>
        <name>1</name>
        <sequence type="displayed"/>
    </isoform>
    <isoform>
        <id>Q9H8T0-2</id>
        <name>2</name>
        <sequence type="described" ref="VSP_037631"/>
    </isoform>
</comment>
<comment type="similarity">
    <text evidence="1">Belongs to the ubiquitin-conjugating enzyme family. FTS subfamily.</text>
</comment>
<comment type="caution">
    <text evidence="9">Lacks the conserved Cys residue necessary for ubiquitin-conjugating enzyme E2 activity.</text>
</comment>
<keyword id="KW-0002">3D-structure</keyword>
<keyword id="KW-0025">Alternative splicing</keyword>
<keyword id="KW-0053">Apoptosis</keyword>
<keyword id="KW-1003">Cell membrane</keyword>
<keyword id="KW-0963">Cytoplasm</keyword>
<keyword id="KW-0472">Membrane</keyword>
<keyword id="KW-0597">Phosphoprotein</keyword>
<keyword id="KW-0653">Protein transport</keyword>
<keyword id="KW-1267">Proteomics identification</keyword>
<keyword id="KW-1185">Reference proteome</keyword>
<keyword id="KW-0813">Transport</keyword>
<name>AKTIP_HUMAN</name>
<evidence type="ECO:0000255" key="1">
    <source>
        <dbReference type="PROSITE-ProRule" id="PRU00388"/>
    </source>
</evidence>
<evidence type="ECO:0000256" key="2">
    <source>
        <dbReference type="SAM" id="MobiDB-lite"/>
    </source>
</evidence>
<evidence type="ECO:0000269" key="3">
    <source>
    </source>
</evidence>
<evidence type="ECO:0000269" key="4">
    <source>
    </source>
</evidence>
<evidence type="ECO:0000269" key="5">
    <source>
    </source>
</evidence>
<evidence type="ECO:0000303" key="6">
    <source>
    </source>
</evidence>
<evidence type="ECO:0000303" key="7">
    <source>
    </source>
</evidence>
<evidence type="ECO:0000303" key="8">
    <source ref="3"/>
</evidence>
<evidence type="ECO:0000305" key="9"/>
<evidence type="ECO:0000312" key="10">
    <source>
        <dbReference type="HGNC" id="HGNC:16710"/>
    </source>
</evidence>
<evidence type="ECO:0007744" key="11">
    <source>
    </source>
</evidence>
<evidence type="ECO:0007829" key="12">
    <source>
        <dbReference type="PDB" id="8QAT"/>
    </source>
</evidence>
<gene>
    <name evidence="10" type="primary">AKTIP</name>
    <name evidence="7" type="synonym">FTS</name>
</gene>
<accession>Q9H8T0</accession>
<accession>Q503B1</accession>
<accession>Q53H38</accession>
<reference key="1">
    <citation type="journal article" date="2004" name="Nat. Genet.">
        <title>Complete sequencing and characterization of 21,243 full-length human cDNAs.</title>
        <authorList>
            <person name="Ota T."/>
            <person name="Suzuki Y."/>
            <person name="Nishikawa T."/>
            <person name="Otsuki T."/>
            <person name="Sugiyama T."/>
            <person name="Irie R."/>
            <person name="Wakamatsu A."/>
            <person name="Hayashi K."/>
            <person name="Sato H."/>
            <person name="Nagai K."/>
            <person name="Kimura K."/>
            <person name="Makita H."/>
            <person name="Sekine M."/>
            <person name="Obayashi M."/>
            <person name="Nishi T."/>
            <person name="Shibahara T."/>
            <person name="Tanaka T."/>
            <person name="Ishii S."/>
            <person name="Yamamoto J."/>
            <person name="Saito K."/>
            <person name="Kawai Y."/>
            <person name="Isono Y."/>
            <person name="Nakamura Y."/>
            <person name="Nagahari K."/>
            <person name="Murakami K."/>
            <person name="Yasuda T."/>
            <person name="Iwayanagi T."/>
            <person name="Wagatsuma M."/>
            <person name="Shiratori A."/>
            <person name="Sudo H."/>
            <person name="Hosoiri T."/>
            <person name="Kaku Y."/>
            <person name="Kodaira H."/>
            <person name="Kondo H."/>
            <person name="Sugawara M."/>
            <person name="Takahashi M."/>
            <person name="Kanda K."/>
            <person name="Yokoi T."/>
            <person name="Furuya T."/>
            <person name="Kikkawa E."/>
            <person name="Omura Y."/>
            <person name="Abe K."/>
            <person name="Kamihara K."/>
            <person name="Katsuta N."/>
            <person name="Sato K."/>
            <person name="Tanikawa M."/>
            <person name="Yamazaki M."/>
            <person name="Ninomiya K."/>
            <person name="Ishibashi T."/>
            <person name="Yamashita H."/>
            <person name="Murakawa K."/>
            <person name="Fujimori K."/>
            <person name="Tanai H."/>
            <person name="Kimata M."/>
            <person name="Watanabe M."/>
            <person name="Hiraoka S."/>
            <person name="Chiba Y."/>
            <person name="Ishida S."/>
            <person name="Ono Y."/>
            <person name="Takiguchi S."/>
            <person name="Watanabe S."/>
            <person name="Yosida M."/>
            <person name="Hotuta T."/>
            <person name="Kusano J."/>
            <person name="Kanehori K."/>
            <person name="Takahashi-Fujii A."/>
            <person name="Hara H."/>
            <person name="Tanase T.-O."/>
            <person name="Nomura Y."/>
            <person name="Togiya S."/>
            <person name="Komai F."/>
            <person name="Hara R."/>
            <person name="Takeuchi K."/>
            <person name="Arita M."/>
            <person name="Imose N."/>
            <person name="Musashino K."/>
            <person name="Yuuki H."/>
            <person name="Oshima A."/>
            <person name="Sasaki N."/>
            <person name="Aotsuka S."/>
            <person name="Yoshikawa Y."/>
            <person name="Matsunawa H."/>
            <person name="Ichihara T."/>
            <person name="Shiohata N."/>
            <person name="Sano S."/>
            <person name="Moriya S."/>
            <person name="Momiyama H."/>
            <person name="Satoh N."/>
            <person name="Takami S."/>
            <person name="Terashima Y."/>
            <person name="Suzuki O."/>
            <person name="Nakagawa S."/>
            <person name="Senoh A."/>
            <person name="Mizoguchi H."/>
            <person name="Goto Y."/>
            <person name="Shimizu F."/>
            <person name="Wakebe H."/>
            <person name="Hishigaki H."/>
            <person name="Watanabe T."/>
            <person name="Sugiyama A."/>
            <person name="Takemoto M."/>
            <person name="Kawakami B."/>
            <person name="Yamazaki M."/>
            <person name="Watanabe K."/>
            <person name="Kumagai A."/>
            <person name="Itakura S."/>
            <person name="Fukuzumi Y."/>
            <person name="Fujimori Y."/>
            <person name="Komiyama M."/>
            <person name="Tashiro H."/>
            <person name="Tanigami A."/>
            <person name="Fujiwara T."/>
            <person name="Ono T."/>
            <person name="Yamada K."/>
            <person name="Fujii Y."/>
            <person name="Ozaki K."/>
            <person name="Hirao M."/>
            <person name="Ohmori Y."/>
            <person name="Kawabata A."/>
            <person name="Hikiji T."/>
            <person name="Kobatake N."/>
            <person name="Inagaki H."/>
            <person name="Ikema Y."/>
            <person name="Okamoto S."/>
            <person name="Okitani R."/>
            <person name="Kawakami T."/>
            <person name="Noguchi S."/>
            <person name="Itoh T."/>
            <person name="Shigeta K."/>
            <person name="Senba T."/>
            <person name="Matsumura K."/>
            <person name="Nakajima Y."/>
            <person name="Mizuno T."/>
            <person name="Morinaga M."/>
            <person name="Sasaki M."/>
            <person name="Togashi T."/>
            <person name="Oyama M."/>
            <person name="Hata H."/>
            <person name="Watanabe M."/>
            <person name="Komatsu T."/>
            <person name="Mizushima-Sugano J."/>
            <person name="Satoh T."/>
            <person name="Shirai Y."/>
            <person name="Takahashi Y."/>
            <person name="Nakagawa K."/>
            <person name="Okumura K."/>
            <person name="Nagase T."/>
            <person name="Nomura N."/>
            <person name="Kikuchi H."/>
            <person name="Masuho Y."/>
            <person name="Yamashita R."/>
            <person name="Nakai K."/>
            <person name="Yada T."/>
            <person name="Nakamura Y."/>
            <person name="Ohara O."/>
            <person name="Isogai T."/>
            <person name="Sugano S."/>
        </authorList>
    </citation>
    <scope>NUCLEOTIDE SEQUENCE [LARGE SCALE MRNA] (ISOFORM 1)</scope>
    <source>
        <tissue>Ovary</tissue>
    </source>
</reference>
<reference key="2">
    <citation type="submission" date="2004-06" db="EMBL/GenBank/DDBJ databases">
        <title>Cloning of human full open reading frames in Gateway(TM) system entry vector (pDONR201).</title>
        <authorList>
            <person name="Ebert L."/>
            <person name="Schick M."/>
            <person name="Neubert P."/>
            <person name="Schatten R."/>
            <person name="Henze S."/>
            <person name="Korn B."/>
        </authorList>
    </citation>
    <scope>NUCLEOTIDE SEQUENCE [LARGE SCALE MRNA] (ISOFORM 1)</scope>
    <source>
        <tissue>Placenta</tissue>
    </source>
</reference>
<reference key="3">
    <citation type="submission" date="2005-04" db="EMBL/GenBank/DDBJ databases">
        <authorList>
            <person name="Suzuki Y."/>
            <person name="Sugano S."/>
            <person name="Totoki Y."/>
            <person name="Toyoda A."/>
            <person name="Takeda T."/>
            <person name="Sakaki Y."/>
            <person name="Tanaka A."/>
            <person name="Yokoyama S."/>
        </authorList>
    </citation>
    <scope>NUCLEOTIDE SEQUENCE [LARGE SCALE MRNA] (ISOFORM 2)</scope>
    <source>
        <tissue>Dermoid cancer</tissue>
    </source>
</reference>
<reference key="4">
    <citation type="submission" date="2005-07" db="EMBL/GenBank/DDBJ databases">
        <authorList>
            <person name="Mural R.J."/>
            <person name="Istrail S."/>
            <person name="Sutton G.G."/>
            <person name="Florea L."/>
            <person name="Halpern A.L."/>
            <person name="Mobarry C.M."/>
            <person name="Lippert R."/>
            <person name="Walenz B."/>
            <person name="Shatkay H."/>
            <person name="Dew I."/>
            <person name="Miller J.R."/>
            <person name="Flanigan M.J."/>
            <person name="Edwards N.J."/>
            <person name="Bolanos R."/>
            <person name="Fasulo D."/>
            <person name="Halldorsson B.V."/>
            <person name="Hannenhalli S."/>
            <person name="Turner R."/>
            <person name="Yooseph S."/>
            <person name="Lu F."/>
            <person name="Nusskern D.R."/>
            <person name="Shue B.C."/>
            <person name="Zheng X.H."/>
            <person name="Zhong F."/>
            <person name="Delcher A.L."/>
            <person name="Huson D.H."/>
            <person name="Kravitz S.A."/>
            <person name="Mouchard L."/>
            <person name="Reinert K."/>
            <person name="Remington K.A."/>
            <person name="Clark A.G."/>
            <person name="Waterman M.S."/>
            <person name="Eichler E.E."/>
            <person name="Adams M.D."/>
            <person name="Hunkapiller M.W."/>
            <person name="Myers E.W."/>
            <person name="Venter J.C."/>
        </authorList>
    </citation>
    <scope>NUCLEOTIDE SEQUENCE [LARGE SCALE GENOMIC DNA]</scope>
</reference>
<reference key="5">
    <citation type="journal article" date="2004" name="Genome Res.">
        <title>The status, quality, and expansion of the NIH full-length cDNA project: the Mammalian Gene Collection (MGC).</title>
        <authorList>
            <consortium name="The MGC Project Team"/>
        </authorList>
    </citation>
    <scope>NUCLEOTIDE SEQUENCE [LARGE SCALE MRNA] (ISOFORMS 1 AND 2)</scope>
    <source>
        <tissue>Skin</tissue>
    </source>
</reference>
<reference key="6">
    <citation type="journal article" date="2004" name="Mol. Cell. Biol.">
        <title>Regulation of apoptosis by the Ft1 protein, a new modulator of protein kinase B/Akt.</title>
        <authorList>
            <person name="Remy I."/>
            <person name="Michnick S.W."/>
        </authorList>
    </citation>
    <scope>FUNCTION</scope>
    <scope>INTERACTION WITH AKT1</scope>
    <scope>SUBCELLULAR LOCATION</scope>
</reference>
<reference key="7">
    <citation type="journal article" date="2008" name="Mol. Biol. Cell">
        <title>An FTS/Hook/p107(FHIP) complex interacts with and promotes endosomal clustering by the homotypic vacuolar protein sorting complex.</title>
        <authorList>
            <person name="Xu L."/>
            <person name="Sowa M.E."/>
            <person name="Chen J."/>
            <person name="Li X."/>
            <person name="Gygi S.P."/>
            <person name="Harper J.W."/>
        </authorList>
    </citation>
    <scope>IDENTIFICATION BY MASS SPECTROMETRY</scope>
    <scope>IDENTIFICATION IN THE FHF COMPLEX</scope>
    <scope>FUNCTION</scope>
    <scope>ASSOCIATION WITH THE HOPS COMPLEX</scope>
    <scope>MUTAGENESIS OF 106-TRP-PHE-107</scope>
</reference>
<reference key="8">
    <citation type="journal article" date="2013" name="J. Proteome Res.">
        <title>Toward a comprehensive characterization of a human cancer cell phosphoproteome.</title>
        <authorList>
            <person name="Zhou H."/>
            <person name="Di Palma S."/>
            <person name="Preisinger C."/>
            <person name="Peng M."/>
            <person name="Polat A.N."/>
            <person name="Heck A.J."/>
            <person name="Mohammed S."/>
        </authorList>
    </citation>
    <scope>PHOSPHORYLATION [LARGE SCALE ANALYSIS] AT SER-30</scope>
    <scope>IDENTIFICATION BY MASS SPECTROMETRY [LARGE SCALE ANALYSIS]</scope>
    <source>
        <tissue>Cervix carcinoma</tissue>
        <tissue>Erythroleukemia</tissue>
    </source>
</reference>
<reference key="9">
    <citation type="journal article" date="2020" name="Mol. Biol. Cell">
        <title>The FTS-Hook-FHIP (FHF) complex interacts with AP-4 to mediate perinuclear distribution of AP-4 and its cargo ATG9A.</title>
        <authorList>
            <person name="Mattera R."/>
            <person name="Williamson C.D."/>
            <person name="Ren X."/>
            <person name="Bonifacino J.S."/>
        </authorList>
    </citation>
    <scope>FUNCTION</scope>
    <scope>INTERACTION WITH HOOK1; FHIP1A AND FHIP1B</scope>
    <scope>MUTAGENESIS OF 106-TRP-PHE-107</scope>
</reference>
<protein>
    <recommendedName>
        <fullName evidence="9">AKT-interacting protein</fullName>
    </recommendedName>
    <alternativeName>
        <fullName>Ft1</fullName>
    </alternativeName>
    <alternativeName>
        <fullName>Fused toes protein homolog</fullName>
    </alternativeName>
</protein>
<proteinExistence type="evidence at protein level"/>
<sequence length="292" mass="33128">MNPFWSMSTSSVRKRSEGEEKTLTGDVKTSPPRTAPKKQLPSIPKNALPITKPTSPAPAAQSTNGTHASYGPFYLEYSLLAEFTLVVKQKLPGVYVQPSYRSALMWFGVIFIRHGLYQDGVFKFTVYIPDNYPDGDCPRLVFDIPVFHPLVDPTSGELDVKRAFAKWRRNHNHIWQVLMYARRVFYKIDTASPLNPEAAVLYEKDIQLFKSKVVDSVKVCTARLFDQPKIEDPYAISFSPWNPSVHDEAREKMLTQKKPEEQHNKSVHVAGLSWVKPGSVQPFSKEEKTVAT</sequence>
<feature type="chain" id="PRO_0000082609" description="AKT-interacting protein">
    <location>
        <begin position="1"/>
        <end position="292"/>
    </location>
</feature>
<feature type="domain" description="UBC core" evidence="1">
    <location>
        <begin position="74"/>
        <end position="222"/>
    </location>
</feature>
<feature type="region of interest" description="Disordered" evidence="2">
    <location>
        <begin position="1"/>
        <end position="63"/>
    </location>
</feature>
<feature type="compositionally biased region" description="Polar residues" evidence="2">
    <location>
        <begin position="1"/>
        <end position="11"/>
    </location>
</feature>
<feature type="compositionally biased region" description="Basic and acidic residues" evidence="2">
    <location>
        <begin position="14"/>
        <end position="23"/>
    </location>
</feature>
<feature type="modified residue" description="Phosphoserine" evidence="11">
    <location>
        <position position="30"/>
    </location>
</feature>
<feature type="splice variant" id="VSP_037631" description="In isoform 2." evidence="6 8">
    <original>Q</original>
    <variation>QK</variation>
    <location>
        <position position="256"/>
    </location>
</feature>
<feature type="mutagenesis site" description="Impairs interaction with FHIP1B, HOOK1, HOOK2 and HOOK3." evidence="4 5">
    <original>WF</original>
    <variation>AA</variation>
    <location>
        <begin position="106"/>
        <end position="107"/>
    </location>
</feature>
<feature type="sequence conflict" description="In Ref. 5; AAH95401." evidence="9" ref="5">
    <original>K</original>
    <variation>N</variation>
    <location>
        <position position="212"/>
    </location>
</feature>
<feature type="turn" evidence="12">
    <location>
        <begin position="67"/>
        <end position="69"/>
    </location>
</feature>
<feature type="helix" evidence="12">
    <location>
        <begin position="71"/>
        <end position="88"/>
    </location>
</feature>
<feature type="strand" evidence="12">
    <location>
        <begin position="94"/>
        <end position="98"/>
    </location>
</feature>
<feature type="strand" evidence="12">
    <location>
        <begin position="103"/>
        <end position="112"/>
    </location>
</feature>
<feature type="turn" evidence="12">
    <location>
        <begin position="116"/>
        <end position="119"/>
    </location>
</feature>
<feature type="strand" evidence="12">
    <location>
        <begin position="120"/>
        <end position="127"/>
    </location>
</feature>
<feature type="turn" evidence="12">
    <location>
        <begin position="130"/>
        <end position="133"/>
    </location>
</feature>
<feature type="strand" evidence="12">
    <location>
        <begin position="139"/>
        <end position="144"/>
    </location>
</feature>
<feature type="turn" evidence="12">
    <location>
        <begin position="153"/>
        <end position="155"/>
    </location>
</feature>
<feature type="helix" evidence="12">
    <location>
        <begin position="160"/>
        <end position="162"/>
    </location>
</feature>
<feature type="turn" evidence="12">
    <location>
        <begin position="169"/>
        <end position="171"/>
    </location>
</feature>
<feature type="helix" evidence="12">
    <location>
        <begin position="174"/>
        <end position="183"/>
    </location>
</feature>
<feature type="turn" evidence="12">
    <location>
        <begin position="184"/>
        <end position="186"/>
    </location>
</feature>
<feature type="helix" evidence="12">
    <location>
        <begin position="196"/>
        <end position="202"/>
    </location>
</feature>
<feature type="helix" evidence="12">
    <location>
        <begin position="206"/>
        <end position="222"/>
    </location>
</feature>
<feature type="turn" evidence="12">
    <location>
        <begin position="223"/>
        <end position="225"/>
    </location>
</feature>
<feature type="helix" evidence="12">
    <location>
        <begin position="243"/>
        <end position="254"/>
    </location>
</feature>
<dbReference type="EMBL" id="AK023320">
    <property type="protein sequence ID" value="BAB14524.1"/>
    <property type="molecule type" value="mRNA"/>
</dbReference>
<dbReference type="EMBL" id="CR457308">
    <property type="protein sequence ID" value="CAG33589.1"/>
    <property type="molecule type" value="mRNA"/>
</dbReference>
<dbReference type="EMBL" id="AK222743">
    <property type="protein sequence ID" value="BAD96463.1"/>
    <property type="molecule type" value="mRNA"/>
</dbReference>
<dbReference type="EMBL" id="CH471092">
    <property type="protein sequence ID" value="EAW82805.1"/>
    <property type="molecule type" value="Genomic_DNA"/>
</dbReference>
<dbReference type="EMBL" id="BC001134">
    <property type="protein sequence ID" value="AAH01134.1"/>
    <property type="molecule type" value="mRNA"/>
</dbReference>
<dbReference type="EMBL" id="BC095401">
    <property type="protein sequence ID" value="AAH95401.1"/>
    <property type="molecule type" value="mRNA"/>
</dbReference>
<dbReference type="CCDS" id="CCDS10749.1">
    <molecule id="Q9H8T0-1"/>
</dbReference>
<dbReference type="CCDS" id="CCDS76866.1">
    <molecule id="Q9H8T0-2"/>
</dbReference>
<dbReference type="RefSeq" id="NP_001012398.1">
    <molecule id="Q9H8T0-1"/>
    <property type="nucleotide sequence ID" value="NM_001012398.3"/>
</dbReference>
<dbReference type="RefSeq" id="NP_001295254.1">
    <molecule id="Q9H8T0-2"/>
    <property type="nucleotide sequence ID" value="NM_001308325.2"/>
</dbReference>
<dbReference type="RefSeq" id="NP_071921.1">
    <molecule id="Q9H8T0-1"/>
    <property type="nucleotide sequence ID" value="NM_022476.4"/>
</dbReference>
<dbReference type="RefSeq" id="XP_005256152.1">
    <molecule id="Q9H8T0-2"/>
    <property type="nucleotide sequence ID" value="XM_005256095.6"/>
</dbReference>
<dbReference type="RefSeq" id="XP_005256153.1">
    <molecule id="Q9H8T0-2"/>
    <property type="nucleotide sequence ID" value="XM_005256096.6"/>
</dbReference>
<dbReference type="RefSeq" id="XP_005256154.1">
    <molecule id="Q9H8T0-2"/>
    <property type="nucleotide sequence ID" value="XM_005256097.6"/>
</dbReference>
<dbReference type="RefSeq" id="XP_005256155.1">
    <molecule id="Q9H8T0-2"/>
    <property type="nucleotide sequence ID" value="XM_005256098.6"/>
</dbReference>
<dbReference type="RefSeq" id="XP_016879053.1">
    <molecule id="Q9H8T0-1"/>
    <property type="nucleotide sequence ID" value="XM_017023564.3"/>
</dbReference>
<dbReference type="RefSeq" id="XP_016879054.1">
    <molecule id="Q9H8T0-1"/>
    <property type="nucleotide sequence ID" value="XM_017023565.2"/>
</dbReference>
<dbReference type="RefSeq" id="XP_016879055.1">
    <molecule id="Q9H8T0-1"/>
    <property type="nucleotide sequence ID" value="XM_017023566.2"/>
</dbReference>
<dbReference type="RefSeq" id="XP_047290441.1">
    <molecule id="Q9H8T0-2"/>
    <property type="nucleotide sequence ID" value="XM_047434485.1"/>
</dbReference>
<dbReference type="RefSeq" id="XP_047290442.1">
    <molecule id="Q9H8T0-1"/>
    <property type="nucleotide sequence ID" value="XM_047434486.1"/>
</dbReference>
<dbReference type="RefSeq" id="XP_054169655.1">
    <molecule id="Q9H8T0-2"/>
    <property type="nucleotide sequence ID" value="XM_054313680.1"/>
</dbReference>
<dbReference type="RefSeq" id="XP_054169656.1">
    <molecule id="Q9H8T0-2"/>
    <property type="nucleotide sequence ID" value="XM_054313681.1"/>
</dbReference>
<dbReference type="RefSeq" id="XP_054169657.1">
    <molecule id="Q9H8T0-2"/>
    <property type="nucleotide sequence ID" value="XM_054313682.1"/>
</dbReference>
<dbReference type="RefSeq" id="XP_054169658.1">
    <molecule id="Q9H8T0-2"/>
    <property type="nucleotide sequence ID" value="XM_054313683.1"/>
</dbReference>
<dbReference type="RefSeq" id="XP_054169659.1">
    <molecule id="Q9H8T0-2"/>
    <property type="nucleotide sequence ID" value="XM_054313684.1"/>
</dbReference>
<dbReference type="RefSeq" id="XP_054169660.1">
    <molecule id="Q9H8T0-1"/>
    <property type="nucleotide sequence ID" value="XM_054313685.1"/>
</dbReference>
<dbReference type="RefSeq" id="XP_054169661.1">
    <molecule id="Q9H8T0-1"/>
    <property type="nucleotide sequence ID" value="XM_054313686.1"/>
</dbReference>
<dbReference type="RefSeq" id="XP_054169662.1">
    <molecule id="Q9H8T0-1"/>
    <property type="nucleotide sequence ID" value="XM_054313687.1"/>
</dbReference>
<dbReference type="RefSeq" id="XP_054169663.1">
    <molecule id="Q9H8T0-1"/>
    <property type="nucleotide sequence ID" value="XM_054313688.1"/>
</dbReference>
<dbReference type="PDB" id="8QAT">
    <property type="method" value="EM"/>
    <property type="resolution" value="3.20 A"/>
    <property type="chains" value="D=1-292"/>
</dbReference>
<dbReference type="PDBsum" id="8QAT"/>
<dbReference type="EMDB" id="EMD-18302"/>
<dbReference type="EMDB" id="EMD-18303"/>
<dbReference type="SMR" id="Q9H8T0"/>
<dbReference type="BioGRID" id="122157">
    <property type="interactions" value="106"/>
</dbReference>
<dbReference type="ComplexPortal" id="CPX-2353">
    <property type="entry name" value="FTS-Hook-FHIP cargo adaptor complex, FHIP1A-HOOK1/3 variant"/>
</dbReference>
<dbReference type="ComplexPortal" id="CPX-2356">
    <property type="entry name" value="FTS-Hook-FHIP cargo adaptor complex, FHIP1B-HOOK1/3 variant"/>
</dbReference>
<dbReference type="ComplexPortal" id="CPX-2357">
    <property type="entry name" value="FTS-Hook-FHIP cargo adaptor complex, FHIP2A-HOOK2 variant"/>
</dbReference>
<dbReference type="ComplexPortal" id="CPX-2359">
    <property type="entry name" value="FTS-Hook-FHIP cargo adaptor complex, FHIP2B-HOOK1/2/3 variant"/>
</dbReference>
<dbReference type="CORUM" id="Q9H8T0"/>
<dbReference type="FunCoup" id="Q9H8T0">
    <property type="interactions" value="1672"/>
</dbReference>
<dbReference type="IntAct" id="Q9H8T0">
    <property type="interactions" value="43"/>
</dbReference>
<dbReference type="STRING" id="9606.ENSP00000300245"/>
<dbReference type="iPTMnet" id="Q9H8T0"/>
<dbReference type="PhosphoSitePlus" id="Q9H8T0"/>
<dbReference type="BioMuta" id="AKTIP"/>
<dbReference type="DMDM" id="54035954"/>
<dbReference type="jPOST" id="Q9H8T0"/>
<dbReference type="MassIVE" id="Q9H8T0"/>
<dbReference type="PaxDb" id="9606-ENSP00000378152"/>
<dbReference type="PeptideAtlas" id="Q9H8T0"/>
<dbReference type="ProteomicsDB" id="81239">
    <molecule id="Q9H8T0-1"/>
</dbReference>
<dbReference type="ProteomicsDB" id="81240">
    <molecule id="Q9H8T0-2"/>
</dbReference>
<dbReference type="Pumba" id="Q9H8T0"/>
<dbReference type="Antibodypedia" id="28404">
    <property type="antibodies" value="268 antibodies from 28 providers"/>
</dbReference>
<dbReference type="DNASU" id="64400"/>
<dbReference type="Ensembl" id="ENST00000300245.8">
    <molecule id="Q9H8T0-2"/>
    <property type="protein sequence ID" value="ENSP00000300245.4"/>
    <property type="gene ID" value="ENSG00000166971.17"/>
</dbReference>
<dbReference type="Ensembl" id="ENST00000394657.12">
    <molecule id="Q9H8T0-1"/>
    <property type="protein sequence ID" value="ENSP00000378152.6"/>
    <property type="gene ID" value="ENSG00000166971.17"/>
</dbReference>
<dbReference type="Ensembl" id="ENST00000570004.5">
    <molecule id="Q9H8T0-1"/>
    <property type="protein sequence ID" value="ENSP00000455874.1"/>
    <property type="gene ID" value="ENSG00000166971.17"/>
</dbReference>
<dbReference type="GeneID" id="64400"/>
<dbReference type="KEGG" id="hsa:64400"/>
<dbReference type="MANE-Select" id="ENST00000394657.12">
    <property type="protein sequence ID" value="ENSP00000378152.6"/>
    <property type="RefSeq nucleotide sequence ID" value="NM_022476.4"/>
    <property type="RefSeq protein sequence ID" value="NP_071921.1"/>
</dbReference>
<dbReference type="UCSC" id="uc002ehk.4">
    <molecule id="Q9H8T0-1"/>
    <property type="organism name" value="human"/>
</dbReference>
<dbReference type="AGR" id="HGNC:16710"/>
<dbReference type="CTD" id="64400"/>
<dbReference type="DisGeNET" id="64400"/>
<dbReference type="GeneCards" id="AKTIP"/>
<dbReference type="HGNC" id="HGNC:16710">
    <property type="gene designation" value="AKTIP"/>
</dbReference>
<dbReference type="HPA" id="ENSG00000166971">
    <property type="expression patterns" value="Low tissue specificity"/>
</dbReference>
<dbReference type="MIM" id="608483">
    <property type="type" value="gene"/>
</dbReference>
<dbReference type="neXtProt" id="NX_Q9H8T0"/>
<dbReference type="OpenTargets" id="ENSG00000166971"/>
<dbReference type="PharmGKB" id="PA162376210"/>
<dbReference type="VEuPathDB" id="HostDB:ENSG00000166971"/>
<dbReference type="eggNOG" id="KOG0429">
    <property type="taxonomic scope" value="Eukaryota"/>
</dbReference>
<dbReference type="GeneTree" id="ENSGT00390000010125"/>
<dbReference type="HOGENOM" id="CLU_083049_0_0_1"/>
<dbReference type="InParanoid" id="Q9H8T0"/>
<dbReference type="OMA" id="WGFPEWR"/>
<dbReference type="OrthoDB" id="5596422at2759"/>
<dbReference type="PAN-GO" id="Q9H8T0">
    <property type="GO annotations" value="3 GO annotations based on evolutionary models"/>
</dbReference>
<dbReference type="PhylomeDB" id="Q9H8T0"/>
<dbReference type="TreeFam" id="TF314386"/>
<dbReference type="PathwayCommons" id="Q9H8T0"/>
<dbReference type="SignaLink" id="Q9H8T0"/>
<dbReference type="BioGRID-ORCS" id="64400">
    <property type="hits" value="87 hits in 1120 CRISPR screens"/>
</dbReference>
<dbReference type="ChiTaRS" id="AKTIP">
    <property type="organism name" value="human"/>
</dbReference>
<dbReference type="GeneWiki" id="AKTIP"/>
<dbReference type="GenomeRNAi" id="64400"/>
<dbReference type="Pharos" id="Q9H8T0">
    <property type="development level" value="Tbio"/>
</dbReference>
<dbReference type="PRO" id="PR:Q9H8T0"/>
<dbReference type="Proteomes" id="UP000005640">
    <property type="component" value="Chromosome 16"/>
</dbReference>
<dbReference type="RNAct" id="Q9H8T0">
    <property type="molecule type" value="protein"/>
</dbReference>
<dbReference type="Bgee" id="ENSG00000166971">
    <property type="expression patterns" value="Expressed in secondary oocyte and 208 other cell types or tissues"/>
</dbReference>
<dbReference type="ExpressionAtlas" id="Q9H8T0">
    <property type="expression patterns" value="baseline and differential"/>
</dbReference>
<dbReference type="GO" id="GO:0070695">
    <property type="term" value="C:FHF complex"/>
    <property type="evidence" value="ECO:0000314"/>
    <property type="project" value="UniProtKB"/>
</dbReference>
<dbReference type="GO" id="GO:0005634">
    <property type="term" value="C:nucleus"/>
    <property type="evidence" value="ECO:0000318"/>
    <property type="project" value="GO_Central"/>
</dbReference>
<dbReference type="GO" id="GO:0005886">
    <property type="term" value="C:plasma membrane"/>
    <property type="evidence" value="ECO:0000314"/>
    <property type="project" value="MGI"/>
</dbReference>
<dbReference type="GO" id="GO:0061631">
    <property type="term" value="F:ubiquitin conjugating enzyme activity"/>
    <property type="evidence" value="ECO:0000318"/>
    <property type="project" value="GO_Central"/>
</dbReference>
<dbReference type="GO" id="GO:0006915">
    <property type="term" value="P:apoptotic process"/>
    <property type="evidence" value="ECO:0007669"/>
    <property type="project" value="UniProtKB-KW"/>
</dbReference>
<dbReference type="GO" id="GO:0045022">
    <property type="term" value="P:early endosome to late endosome transport"/>
    <property type="evidence" value="ECO:0000315"/>
    <property type="project" value="UniProtKB"/>
</dbReference>
<dbReference type="GO" id="GO:0007032">
    <property type="term" value="P:endosome organization"/>
    <property type="evidence" value="ECO:0000315"/>
    <property type="project" value="UniProtKB"/>
</dbReference>
<dbReference type="GO" id="GO:0008333">
    <property type="term" value="P:endosome to lysosome transport"/>
    <property type="evidence" value="ECO:0000315"/>
    <property type="project" value="UniProtKB"/>
</dbReference>
<dbReference type="GO" id="GO:0007040">
    <property type="term" value="P:lysosome organization"/>
    <property type="evidence" value="ECO:0000315"/>
    <property type="project" value="UniProtKB"/>
</dbReference>
<dbReference type="GO" id="GO:0032092">
    <property type="term" value="P:positive regulation of protein binding"/>
    <property type="evidence" value="ECO:0000314"/>
    <property type="project" value="MGI"/>
</dbReference>
<dbReference type="GO" id="GO:0001934">
    <property type="term" value="P:positive regulation of protein phosphorylation"/>
    <property type="evidence" value="ECO:0000314"/>
    <property type="project" value="MGI"/>
</dbReference>
<dbReference type="GO" id="GO:0006301">
    <property type="term" value="P:postreplication repair"/>
    <property type="evidence" value="ECO:0000318"/>
    <property type="project" value="GO_Central"/>
</dbReference>
<dbReference type="GO" id="GO:0070534">
    <property type="term" value="P:protein K63-linked ubiquitination"/>
    <property type="evidence" value="ECO:0000318"/>
    <property type="project" value="GO_Central"/>
</dbReference>
<dbReference type="GO" id="GO:1905719">
    <property type="term" value="P:protein localization to perinuclear region of cytoplasm"/>
    <property type="evidence" value="ECO:0000315"/>
    <property type="project" value="UniProtKB"/>
</dbReference>
<dbReference type="GO" id="GO:0015031">
    <property type="term" value="P:protein transport"/>
    <property type="evidence" value="ECO:0007669"/>
    <property type="project" value="UniProtKB-KW"/>
</dbReference>
<dbReference type="CDD" id="cd23814">
    <property type="entry name" value="UEV_AKTIP"/>
    <property type="match status" value="1"/>
</dbReference>
<dbReference type="FunFam" id="3.10.110.10:FF:000030">
    <property type="entry name" value="AKT-interacting protein-like isoform X2"/>
    <property type="match status" value="1"/>
</dbReference>
<dbReference type="Gene3D" id="3.10.110.10">
    <property type="entry name" value="Ubiquitin Conjugating Enzyme"/>
    <property type="match status" value="1"/>
</dbReference>
<dbReference type="InterPro" id="IPR050113">
    <property type="entry name" value="Ub_conjugating_enzyme"/>
</dbReference>
<dbReference type="InterPro" id="IPR000608">
    <property type="entry name" value="UBQ-conjugat_E2_core"/>
</dbReference>
<dbReference type="InterPro" id="IPR016135">
    <property type="entry name" value="UBQ-conjugating_enzyme/RWD"/>
</dbReference>
<dbReference type="PANTHER" id="PTHR24067">
    <property type="entry name" value="UBIQUITIN-CONJUGATING ENZYME E2"/>
    <property type="match status" value="1"/>
</dbReference>
<dbReference type="Pfam" id="PF00179">
    <property type="entry name" value="UQ_con"/>
    <property type="match status" value="1"/>
</dbReference>
<dbReference type="SMART" id="SM00212">
    <property type="entry name" value="UBCc"/>
    <property type="match status" value="1"/>
</dbReference>
<dbReference type="SUPFAM" id="SSF54495">
    <property type="entry name" value="UBC-like"/>
    <property type="match status" value="1"/>
</dbReference>
<dbReference type="PROSITE" id="PS50127">
    <property type="entry name" value="UBC_2"/>
    <property type="match status" value="1"/>
</dbReference>